<accession>O01615</accession>
<feature type="chain" id="PRO_0000240432" description="Acidic leucine-rich nuclear phosphoprotein 32-related protein 2">
    <location>
        <begin position="1"/>
        <end position="225"/>
    </location>
</feature>
<feature type="repeat" description="LRR 1">
    <location>
        <begin position="39"/>
        <end position="60"/>
    </location>
</feature>
<feature type="repeat" description="LRR 2">
    <location>
        <begin position="61"/>
        <end position="82"/>
    </location>
</feature>
<feature type="repeat" description="LRR 3">
    <location>
        <begin position="87"/>
        <end position="107"/>
    </location>
</feature>
<feature type="domain" description="LRRCT">
    <location>
        <begin position="121"/>
        <end position="161"/>
    </location>
</feature>
<feature type="region of interest" description="Disordered" evidence="1">
    <location>
        <begin position="155"/>
        <end position="225"/>
    </location>
</feature>
<feature type="compositionally biased region" description="Acidic residues" evidence="1">
    <location>
        <begin position="155"/>
        <end position="175"/>
    </location>
</feature>
<comment type="similarity">
    <text evidence="2">Belongs to the ANP32 family.</text>
</comment>
<name>AN322_CAEEL</name>
<dbReference type="EMBL" id="FO080814">
    <property type="protein sequence ID" value="CCD66998.1"/>
    <property type="molecule type" value="Genomic_DNA"/>
</dbReference>
<dbReference type="PIR" id="T34456">
    <property type="entry name" value="T34456"/>
</dbReference>
<dbReference type="RefSeq" id="NP_504310.1">
    <property type="nucleotide sequence ID" value="NM_071909.5"/>
</dbReference>
<dbReference type="SMR" id="O01615"/>
<dbReference type="BioGRID" id="43931">
    <property type="interactions" value="2"/>
</dbReference>
<dbReference type="FunCoup" id="O01615">
    <property type="interactions" value="2466"/>
</dbReference>
<dbReference type="STRING" id="6239.T19H12.2.1"/>
<dbReference type="iPTMnet" id="O01615"/>
<dbReference type="PaxDb" id="6239-T19H12.2"/>
<dbReference type="PeptideAtlas" id="O01615"/>
<dbReference type="EnsemblMetazoa" id="T19H12.2.1">
    <property type="protein sequence ID" value="T19H12.2.1"/>
    <property type="gene ID" value="WBGene00020588"/>
</dbReference>
<dbReference type="GeneID" id="178881"/>
<dbReference type="KEGG" id="cel:CELE_T19H12.2"/>
<dbReference type="UCSC" id="T19H12.2">
    <property type="organism name" value="c. elegans"/>
</dbReference>
<dbReference type="AGR" id="WB:WBGene00020588"/>
<dbReference type="CTD" id="178881"/>
<dbReference type="WormBase" id="T19H12.2">
    <property type="protein sequence ID" value="CE52930"/>
    <property type="gene ID" value="WBGene00020588"/>
</dbReference>
<dbReference type="eggNOG" id="KOG2739">
    <property type="taxonomic scope" value="Eukaryota"/>
</dbReference>
<dbReference type="GeneTree" id="ENSGT00950000182907"/>
<dbReference type="HOGENOM" id="CLU_063314_3_1_1"/>
<dbReference type="InParanoid" id="O01615"/>
<dbReference type="OMA" id="LMNYRES"/>
<dbReference type="OrthoDB" id="2160613at2759"/>
<dbReference type="PhylomeDB" id="O01615"/>
<dbReference type="PRO" id="PR:O01615"/>
<dbReference type="Proteomes" id="UP000001940">
    <property type="component" value="Chromosome V"/>
</dbReference>
<dbReference type="Bgee" id="WBGene00020588">
    <property type="expression patterns" value="Expressed in embryo and 4 other cell types or tissues"/>
</dbReference>
<dbReference type="GO" id="GO:0005634">
    <property type="term" value="C:nucleus"/>
    <property type="evidence" value="ECO:0000318"/>
    <property type="project" value="GO_Central"/>
</dbReference>
<dbReference type="GO" id="GO:0042393">
    <property type="term" value="F:histone binding"/>
    <property type="evidence" value="ECO:0000318"/>
    <property type="project" value="GO_Central"/>
</dbReference>
<dbReference type="FunFam" id="3.80.10.10:FF:000131">
    <property type="entry name" value="acidic leucine-rich nuclear phosphoprotein 32-related protein-like"/>
    <property type="match status" value="1"/>
</dbReference>
<dbReference type="Gene3D" id="3.80.10.10">
    <property type="entry name" value="Ribonuclease Inhibitor"/>
    <property type="match status" value="1"/>
</dbReference>
<dbReference type="InterPro" id="IPR045081">
    <property type="entry name" value="AN32"/>
</dbReference>
<dbReference type="InterPro" id="IPR032675">
    <property type="entry name" value="LRR_dom_sf"/>
</dbReference>
<dbReference type="PANTHER" id="PTHR11375">
    <property type="entry name" value="ACIDIC LEUCINE-RICH NUCLEAR PHOSPHOPROTEIN 32"/>
    <property type="match status" value="1"/>
</dbReference>
<dbReference type="PANTHER" id="PTHR11375:SF0">
    <property type="entry name" value="ACIDIC LEUCINE-RICH NUCLEAR PHOSPHOPROTEIN 32 FAMILY MEMBER A"/>
    <property type="match status" value="1"/>
</dbReference>
<dbReference type="SUPFAM" id="SSF52058">
    <property type="entry name" value="L domain-like"/>
    <property type="match status" value="1"/>
</dbReference>
<organism>
    <name type="scientific">Caenorhabditis elegans</name>
    <dbReference type="NCBI Taxonomy" id="6239"/>
    <lineage>
        <taxon>Eukaryota</taxon>
        <taxon>Metazoa</taxon>
        <taxon>Ecdysozoa</taxon>
        <taxon>Nematoda</taxon>
        <taxon>Chromadorea</taxon>
        <taxon>Rhabditida</taxon>
        <taxon>Rhabditina</taxon>
        <taxon>Rhabditomorpha</taxon>
        <taxon>Rhabditoidea</taxon>
        <taxon>Rhabditidae</taxon>
        <taxon>Peloderinae</taxon>
        <taxon>Caenorhabditis</taxon>
    </lineage>
</organism>
<gene>
    <name type="ORF">T19H12.2</name>
</gene>
<evidence type="ECO:0000256" key="1">
    <source>
        <dbReference type="SAM" id="MobiDB-lite"/>
    </source>
</evidence>
<evidence type="ECO:0000305" key="2"/>
<proteinExistence type="inferred from homology"/>
<protein>
    <recommendedName>
        <fullName>Acidic leucine-rich nuclear phosphoprotein 32-related protein 2</fullName>
    </recommendedName>
    <alternativeName>
        <fullName>ANP32/acidic nuclear phosphoprotein-like protein 2</fullName>
    </alternativeName>
</protein>
<sequence>MEEVYASELRGREPETVDTLFLDNTQGGVIGGINEKLTKLELLSMVKCGLTTLKGMPVLPALNYLDLSDNELGDDASFDVLIKCAPEIKKITLSGNRLTLDNVRTLKMLPNLMELDLSNNSSLGLLDDYRVKMFEMIPSLKILDGCDVDGEEVEEEFAAGEGAEDSDEGDSDEDGPGLSYLNKSQFSDDETDDYVVPEAGDAETRGAKRAASADCDEPEAKKSAE</sequence>
<reference key="1">
    <citation type="journal article" date="1998" name="Science">
        <title>Genome sequence of the nematode C. elegans: a platform for investigating biology.</title>
        <authorList>
            <consortium name="The C. elegans sequencing consortium"/>
        </authorList>
    </citation>
    <scope>NUCLEOTIDE SEQUENCE [LARGE SCALE GENOMIC DNA]</scope>
    <source>
        <strain>Bristol N2</strain>
    </source>
</reference>
<keyword id="KW-0433">Leucine-rich repeat</keyword>
<keyword id="KW-1185">Reference proteome</keyword>
<keyword id="KW-0677">Repeat</keyword>